<sequence length="323" mass="35200">MKKEINMENLLYIIIEGGLKSLIVIIGLLIGVAFATLLERKVMAAMQKRRGPNVVGFVGLLQPLADGLKLVLKETIIPIVADKIIYAIAPILTFTISIVLWSVIAVGVQSVFASINSGVIFILAISSIGVYGIILAGWASNSKYAFLGGLRSAAQMVSYEVALGLIILSIITYAGTVNIQEIMENQEKVWFIVPLLPGFLLAFISALAETNRPPFDLPEAEAELVSGYNVEYSSTGFALFFLGEYANIILMSVLLSVFFLGGIVSNKISGAMKGVGMLCSFIWVRATLPRYRYDQLMYLGWKSLLPFALLIYIGVISMVLIIK</sequence>
<comment type="function">
    <text evidence="1">Core subunit of the mitochondrial membrane respiratory chain NADH dehydrogenase (Complex I) that is believed to belong to the minimal assembly required for catalysis. Complex I functions in the transfer of electrons from NADH to the respiratory chain. The immediate electron acceptor for the enzyme is believed to be ubiquinone (By similarity).</text>
</comment>
<comment type="catalytic activity">
    <reaction>
        <text>a ubiquinone + NADH + 5 H(+)(in) = a ubiquinol + NAD(+) + 4 H(+)(out)</text>
        <dbReference type="Rhea" id="RHEA:29091"/>
        <dbReference type="Rhea" id="RHEA-COMP:9565"/>
        <dbReference type="Rhea" id="RHEA-COMP:9566"/>
        <dbReference type="ChEBI" id="CHEBI:15378"/>
        <dbReference type="ChEBI" id="CHEBI:16389"/>
        <dbReference type="ChEBI" id="CHEBI:17976"/>
        <dbReference type="ChEBI" id="CHEBI:57540"/>
        <dbReference type="ChEBI" id="CHEBI:57945"/>
        <dbReference type="EC" id="7.1.1.2"/>
    </reaction>
</comment>
<comment type="subcellular location">
    <subcellularLocation>
        <location evidence="1">Mitochondrion inner membrane</location>
        <topology evidence="1">Multi-pass membrane protein</topology>
    </subcellularLocation>
</comment>
<comment type="similarity">
    <text evidence="3">Belongs to the complex I subunit 1 family.</text>
</comment>
<gene>
    <name type="primary">nad1</name>
</gene>
<proteinExistence type="inferred from homology"/>
<keyword id="KW-0249">Electron transport</keyword>
<keyword id="KW-0472">Membrane</keyword>
<keyword id="KW-0496">Mitochondrion</keyword>
<keyword id="KW-0999">Mitochondrion inner membrane</keyword>
<keyword id="KW-0520">NAD</keyword>
<keyword id="KW-0679">Respiratory chain</keyword>
<keyword id="KW-1278">Translocase</keyword>
<keyword id="KW-0812">Transmembrane</keyword>
<keyword id="KW-1133">Transmembrane helix</keyword>
<keyword id="KW-0813">Transport</keyword>
<keyword id="KW-0830">Ubiquinone</keyword>
<organism>
    <name type="scientific">Dictyostelium citrinum</name>
    <name type="common">Slime mold</name>
    <dbReference type="NCBI Taxonomy" id="361072"/>
    <lineage>
        <taxon>Eukaryota</taxon>
        <taxon>Amoebozoa</taxon>
        <taxon>Evosea</taxon>
        <taxon>Eumycetozoa</taxon>
        <taxon>Dictyostelia</taxon>
        <taxon>Dictyosteliales</taxon>
        <taxon>Dictyosteliaceae</taxon>
        <taxon>Dictyostelium</taxon>
    </lineage>
</organism>
<dbReference type="EC" id="7.1.1.2"/>
<dbReference type="EMBL" id="DQ336395">
    <property type="protein sequence ID" value="ABC60382.1"/>
    <property type="molecule type" value="Genomic_DNA"/>
</dbReference>
<dbReference type="RefSeq" id="YP_492631.1">
    <property type="nucleotide sequence ID" value="NC_007787.2"/>
</dbReference>
<dbReference type="SMR" id="Q2LCR1"/>
<dbReference type="GeneID" id="3912626"/>
<dbReference type="GO" id="GO:0005743">
    <property type="term" value="C:mitochondrial inner membrane"/>
    <property type="evidence" value="ECO:0007669"/>
    <property type="project" value="UniProtKB-SubCell"/>
</dbReference>
<dbReference type="GO" id="GO:0008137">
    <property type="term" value="F:NADH dehydrogenase (ubiquinone) activity"/>
    <property type="evidence" value="ECO:0007669"/>
    <property type="project" value="UniProtKB-EC"/>
</dbReference>
<dbReference type="GO" id="GO:0009060">
    <property type="term" value="P:aerobic respiration"/>
    <property type="evidence" value="ECO:0007669"/>
    <property type="project" value="TreeGrafter"/>
</dbReference>
<dbReference type="HAMAP" id="MF_01350">
    <property type="entry name" value="NDH1_NuoH"/>
    <property type="match status" value="1"/>
</dbReference>
<dbReference type="InterPro" id="IPR001694">
    <property type="entry name" value="NADH_UbQ_OxRdtase_su1/FPO"/>
</dbReference>
<dbReference type="InterPro" id="IPR018086">
    <property type="entry name" value="NADH_UbQ_OxRdtase_su1_CS"/>
</dbReference>
<dbReference type="PANTHER" id="PTHR11432">
    <property type="entry name" value="NADH DEHYDROGENASE SUBUNIT 1"/>
    <property type="match status" value="1"/>
</dbReference>
<dbReference type="PANTHER" id="PTHR11432:SF3">
    <property type="entry name" value="NADH-UBIQUINONE OXIDOREDUCTASE CHAIN 1"/>
    <property type="match status" value="1"/>
</dbReference>
<dbReference type="Pfam" id="PF00146">
    <property type="entry name" value="NADHdh"/>
    <property type="match status" value="1"/>
</dbReference>
<dbReference type="PROSITE" id="PS00667">
    <property type="entry name" value="COMPLEX1_ND1_1"/>
    <property type="match status" value="1"/>
</dbReference>
<dbReference type="PROSITE" id="PS00668">
    <property type="entry name" value="COMPLEX1_ND1_2"/>
    <property type="match status" value="1"/>
</dbReference>
<evidence type="ECO:0000250" key="1"/>
<evidence type="ECO:0000255" key="2"/>
<evidence type="ECO:0000305" key="3"/>
<accession>Q2LCR1</accession>
<geneLocation type="mitochondrion"/>
<reference key="1">
    <citation type="journal article" date="2008" name="Mol. Biol. Evol.">
        <title>Mitochondrial genome evolution in the social amoebae.</title>
        <authorList>
            <person name="Heidel A.J."/>
            <person name="Gloeckner G."/>
        </authorList>
    </citation>
    <scope>NUCLEOTIDE SEQUENCE [LARGE SCALE GENOMIC DNA]</scope>
</reference>
<protein>
    <recommendedName>
        <fullName>NADH-ubiquinone oxidoreductase chain 1</fullName>
        <ecNumber>7.1.1.2</ecNumber>
    </recommendedName>
    <alternativeName>
        <fullName>NADH dehydrogenase subunit 1</fullName>
    </alternativeName>
</protein>
<name>NU1M_DICCI</name>
<feature type="chain" id="PRO_0000312390" description="NADH-ubiquinone oxidoreductase chain 1">
    <location>
        <begin position="1"/>
        <end position="323"/>
    </location>
</feature>
<feature type="transmembrane region" description="Helical" evidence="2">
    <location>
        <begin position="10"/>
        <end position="30"/>
    </location>
</feature>
<feature type="transmembrane region" description="Helical" evidence="2">
    <location>
        <begin position="52"/>
        <end position="72"/>
    </location>
</feature>
<feature type="transmembrane region" description="Helical" evidence="2">
    <location>
        <begin position="84"/>
        <end position="104"/>
    </location>
</feature>
<feature type="transmembrane region" description="Helical" evidence="2">
    <location>
        <begin position="119"/>
        <end position="139"/>
    </location>
</feature>
<feature type="transmembrane region" description="Helical" evidence="2">
    <location>
        <begin position="157"/>
        <end position="177"/>
    </location>
</feature>
<feature type="transmembrane region" description="Helical" evidence="2">
    <location>
        <begin position="189"/>
        <end position="209"/>
    </location>
</feature>
<feature type="transmembrane region" description="Helical" evidence="2">
    <location>
        <begin position="245"/>
        <end position="265"/>
    </location>
</feature>
<feature type="transmembrane region" description="Helical" evidence="2">
    <location>
        <begin position="268"/>
        <end position="288"/>
    </location>
</feature>
<feature type="transmembrane region" description="Helical" evidence="2">
    <location>
        <begin position="302"/>
        <end position="322"/>
    </location>
</feature>